<gene>
    <name type="primary">IL4</name>
</gene>
<evidence type="ECO:0000250" key="1"/>
<evidence type="ECO:0000250" key="2">
    <source>
        <dbReference type="UniProtKB" id="P07750"/>
    </source>
</evidence>
<evidence type="ECO:0000255" key="3"/>
<evidence type="ECO:0000305" key="4"/>
<accession>P79155</accession>
<keyword id="KW-0075">B-cell activation</keyword>
<keyword id="KW-0202">Cytokine</keyword>
<keyword id="KW-1015">Disulfide bond</keyword>
<keyword id="KW-0325">Glycoprotein</keyword>
<keyword id="KW-0339">Growth factor</keyword>
<keyword id="KW-1185">Reference proteome</keyword>
<keyword id="KW-0964">Secreted</keyword>
<keyword id="KW-0732">Signal</keyword>
<name>IL4_CAPHI</name>
<organism>
    <name type="scientific">Capra hircus</name>
    <name type="common">Goat</name>
    <dbReference type="NCBI Taxonomy" id="9925"/>
    <lineage>
        <taxon>Eukaryota</taxon>
        <taxon>Metazoa</taxon>
        <taxon>Chordata</taxon>
        <taxon>Craniata</taxon>
        <taxon>Vertebrata</taxon>
        <taxon>Euteleostomi</taxon>
        <taxon>Mammalia</taxon>
        <taxon>Eutheria</taxon>
        <taxon>Laurasiatheria</taxon>
        <taxon>Artiodactyla</taxon>
        <taxon>Ruminantia</taxon>
        <taxon>Pecora</taxon>
        <taxon>Bovidae</taxon>
        <taxon>Caprinae</taxon>
        <taxon>Capra</taxon>
    </lineage>
</organism>
<comment type="function">
    <text evidence="2">Participates in at least several B-cell activation processes as well as of other cell types. It is a costimulator of DNA-synthesis. It induces the expression of class II MHC molecules on resting B-cells. It enhances both secretion and cell surface expression of IgE and IgG1. It also regulates the expression of the low affinity Fc receptor for IgE (CD23) on both lymphocytes and monocytes. Positively regulates IL31RA expression in macrophages. Stimulates autophagy in dendritic cells by interfering with mTORC1 signaling and through the induction of RUFY4.</text>
</comment>
<comment type="subcellular location">
    <subcellularLocation>
        <location>Secreted</location>
    </subcellularLocation>
</comment>
<comment type="similarity">
    <text evidence="4">Belongs to the IL-4/IL-13 family.</text>
</comment>
<proteinExistence type="evidence at transcript level"/>
<reference key="1">
    <citation type="submission" date="1996-12" db="EMBL/GenBank/DDBJ databases">
        <title>Nucleotide sequence of caprine interferon-gamma, interleukin-2 and interleukin-4 cDNAs.</title>
        <authorList>
            <person name="Beyer J.C."/>
            <person name="Cheevers W.P."/>
        </authorList>
    </citation>
    <scope>NUCLEOTIDE SEQUENCE [MRNA]</scope>
</reference>
<protein>
    <recommendedName>
        <fullName>Interleukin-4</fullName>
        <shortName>IL-4</shortName>
    </recommendedName>
    <alternativeName>
        <fullName>B-cell stimulatory factor 1</fullName>
        <shortName>BSF-1</shortName>
    </alternativeName>
    <alternativeName>
        <fullName>Lymphocyte stimulatory factor 1</fullName>
    </alternativeName>
</protein>
<sequence length="135" mass="15137">MGLTSQLIPALVCLLVCTSHFVHGHKCDITLEEIIKMLNILTSQKNSCMELPVADVFAAPKNATEKETFCRAGIELRRIYRNHMCLNKFLGGLDRNLSSLASKTCSVNEAKTSTSTLRDLLERLKTIMKEKYSKC</sequence>
<dbReference type="EMBL" id="U34273">
    <property type="protein sequence ID" value="AAB38526.1"/>
    <property type="molecule type" value="mRNA"/>
</dbReference>
<dbReference type="RefSeq" id="NP_001272610.1">
    <property type="nucleotide sequence ID" value="NM_001285681.1"/>
</dbReference>
<dbReference type="SMR" id="P79155"/>
<dbReference type="STRING" id="9925.ENSCHIP00000020527"/>
<dbReference type="GlyCosmos" id="P79155">
    <property type="glycosylation" value="2 sites, No reported glycans"/>
</dbReference>
<dbReference type="GeneID" id="100860814"/>
<dbReference type="KEGG" id="chx:100860814"/>
<dbReference type="CTD" id="3565"/>
<dbReference type="OrthoDB" id="9528087at2759"/>
<dbReference type="Proteomes" id="UP000291000">
    <property type="component" value="Unassembled WGS sequence"/>
</dbReference>
<dbReference type="Proteomes" id="UP000694566">
    <property type="component" value="Unplaced"/>
</dbReference>
<dbReference type="GO" id="GO:0005615">
    <property type="term" value="C:extracellular space"/>
    <property type="evidence" value="ECO:0000250"/>
    <property type="project" value="UniProtKB"/>
</dbReference>
<dbReference type="GO" id="GO:0005125">
    <property type="term" value="F:cytokine activity"/>
    <property type="evidence" value="ECO:0007669"/>
    <property type="project" value="UniProtKB-KW"/>
</dbReference>
<dbReference type="GO" id="GO:0008083">
    <property type="term" value="F:growth factor activity"/>
    <property type="evidence" value="ECO:0007669"/>
    <property type="project" value="UniProtKB-KW"/>
</dbReference>
<dbReference type="GO" id="GO:0005136">
    <property type="term" value="F:interleukin-4 receptor binding"/>
    <property type="evidence" value="ECO:0007669"/>
    <property type="project" value="InterPro"/>
</dbReference>
<dbReference type="GO" id="GO:0042113">
    <property type="term" value="P:B cell activation"/>
    <property type="evidence" value="ECO:0007669"/>
    <property type="project" value="UniProtKB-KW"/>
</dbReference>
<dbReference type="GO" id="GO:0006955">
    <property type="term" value="P:immune response"/>
    <property type="evidence" value="ECO:0007669"/>
    <property type="project" value="InterPro"/>
</dbReference>
<dbReference type="GO" id="GO:0035771">
    <property type="term" value="P:interleukin-4-mediated signaling pathway"/>
    <property type="evidence" value="ECO:0007669"/>
    <property type="project" value="TreeGrafter"/>
</dbReference>
<dbReference type="GO" id="GO:0043066">
    <property type="term" value="P:negative regulation of apoptotic process"/>
    <property type="evidence" value="ECO:0000250"/>
    <property type="project" value="UniProtKB"/>
</dbReference>
<dbReference type="GO" id="GO:0050728">
    <property type="term" value="P:negative regulation of inflammatory response"/>
    <property type="evidence" value="ECO:0007669"/>
    <property type="project" value="TreeGrafter"/>
</dbReference>
<dbReference type="GO" id="GO:0045671">
    <property type="term" value="P:negative regulation of osteoclast differentiation"/>
    <property type="evidence" value="ECO:0000250"/>
    <property type="project" value="UniProtKB"/>
</dbReference>
<dbReference type="GO" id="GO:0030890">
    <property type="term" value="P:positive regulation of B cell proliferation"/>
    <property type="evidence" value="ECO:0000250"/>
    <property type="project" value="UniProtKB"/>
</dbReference>
<dbReference type="GO" id="GO:0048295">
    <property type="term" value="P:positive regulation of isotype switching to IgE isotypes"/>
    <property type="evidence" value="ECO:0000250"/>
    <property type="project" value="UniProtKB"/>
</dbReference>
<dbReference type="GO" id="GO:0048304">
    <property type="term" value="P:positive regulation of isotype switching to IgG isotypes"/>
    <property type="evidence" value="ECO:0000250"/>
    <property type="project" value="UniProtKB"/>
</dbReference>
<dbReference type="GO" id="GO:0016239">
    <property type="term" value="P:positive regulation of macroautophagy"/>
    <property type="evidence" value="ECO:0000250"/>
    <property type="project" value="UniProtKB"/>
</dbReference>
<dbReference type="GO" id="GO:0045348">
    <property type="term" value="P:positive regulation of MHC class II biosynthetic process"/>
    <property type="evidence" value="ECO:0000250"/>
    <property type="project" value="UniProtKB"/>
</dbReference>
<dbReference type="GO" id="GO:0042102">
    <property type="term" value="P:positive regulation of T cell proliferation"/>
    <property type="evidence" value="ECO:0000250"/>
    <property type="project" value="UniProtKB"/>
</dbReference>
<dbReference type="GO" id="GO:0045944">
    <property type="term" value="P:positive regulation of transcription by RNA polymerase II"/>
    <property type="evidence" value="ECO:0000250"/>
    <property type="project" value="UniProtKB"/>
</dbReference>
<dbReference type="GO" id="GO:0050776">
    <property type="term" value="P:regulation of immune response"/>
    <property type="evidence" value="ECO:0000250"/>
    <property type="project" value="UniProtKB"/>
</dbReference>
<dbReference type="FunFam" id="1.20.1250.10:FF:000014">
    <property type="entry name" value="Interleukin-4"/>
    <property type="match status" value="1"/>
</dbReference>
<dbReference type="Gene3D" id="1.20.1250.10">
    <property type="match status" value="1"/>
</dbReference>
<dbReference type="InterPro" id="IPR009079">
    <property type="entry name" value="4_helix_cytokine-like_core"/>
</dbReference>
<dbReference type="InterPro" id="IPR002354">
    <property type="entry name" value="IL-4"/>
</dbReference>
<dbReference type="InterPro" id="IPR001325">
    <property type="entry name" value="IL-4/IL-13"/>
</dbReference>
<dbReference type="InterPro" id="IPR018096">
    <property type="entry name" value="IL-4/IL-13_CS"/>
</dbReference>
<dbReference type="PANTHER" id="PTHR47401">
    <property type="entry name" value="INTERLEUKIN-4"/>
    <property type="match status" value="1"/>
</dbReference>
<dbReference type="PANTHER" id="PTHR47401:SF1">
    <property type="entry name" value="INTERLEUKIN-4"/>
    <property type="match status" value="1"/>
</dbReference>
<dbReference type="Pfam" id="PF00727">
    <property type="entry name" value="IL4"/>
    <property type="match status" value="1"/>
</dbReference>
<dbReference type="PIRSF" id="PIRSF001941">
    <property type="entry name" value="Interleukin_4"/>
    <property type="match status" value="1"/>
</dbReference>
<dbReference type="PRINTS" id="PR00431">
    <property type="entry name" value="INTERLEUKIN4"/>
</dbReference>
<dbReference type="SMART" id="SM00190">
    <property type="entry name" value="IL4_13"/>
    <property type="match status" value="1"/>
</dbReference>
<dbReference type="SUPFAM" id="SSF47266">
    <property type="entry name" value="4-helical cytokines"/>
    <property type="match status" value="1"/>
</dbReference>
<dbReference type="PROSITE" id="PS00838">
    <property type="entry name" value="INTERLEUKIN_4_13"/>
    <property type="match status" value="1"/>
</dbReference>
<feature type="signal peptide" evidence="1">
    <location>
        <begin position="1"/>
        <end position="24"/>
    </location>
</feature>
<feature type="chain" id="PRO_0000015527" description="Interleukin-4">
    <location>
        <begin position="25"/>
        <end position="135"/>
    </location>
</feature>
<feature type="glycosylation site" description="N-linked (GlcNAc...) asparagine" evidence="3">
    <location>
        <position position="62"/>
    </location>
</feature>
<feature type="glycosylation site" description="N-linked (GlcNAc...) asparagine" evidence="3">
    <location>
        <position position="96"/>
    </location>
</feature>
<feature type="disulfide bond" evidence="1">
    <location>
        <begin position="27"/>
        <end position="135"/>
    </location>
</feature>
<feature type="disulfide bond" evidence="1">
    <location>
        <begin position="48"/>
        <end position="85"/>
    </location>
</feature>
<feature type="disulfide bond" evidence="1">
    <location>
        <begin position="70"/>
        <end position="105"/>
    </location>
</feature>